<proteinExistence type="evidence at transcript level"/>
<evidence type="ECO:0000250" key="1"/>
<evidence type="ECO:0000305" key="2"/>
<sequence>MSLIEDILQTSSTVTLLGTVLFLLVLYLRSSGSSSEEQGKEPPGPRPLPLLGNMLQLDLKKPYCTLCELSKKYGSIFTVHFGPKKVVVLAGYKTVKQALVNQAEDFGDRDITPVFYDFNQGHGILFANGDSWKEMRRFALTNLRDFGMGKKGSEEKILEEIPYLIEVFEKHEGKAFDTTQSVLYAVSNIISAIVYGSRFEYTDPLFTGMADRAKESIHLTGSASIQMYNMFPWLGPWINNLTRLKKNIADMKMEVIELVRGLKETLNPHMCRGFVDSFLVRKQTLEESGHMDSFYHDDNLVFSVGNLFSAGTDTTGTTLRWGLLLMTKYPHIQDQVQEEISRVIGSRQTLVEDRKNLPYTDAVIHETQRLANIVPMSVPHTTSRDVTFQGYFIKKGTSVIPLLTSVLQDDSEWESPNTFNPSHFLDEQGGFVKRDAFMAFSAGRRVCLGEGLARMELFLFFTSLLQRFRFSPPPGVTEDDLDLTPLLGFTLNPSPHQLCAVSRV</sequence>
<protein>
    <recommendedName>
        <fullName>Cytochrome P450 2K1</fullName>
        <ecNumber>1.14.14.1</ecNumber>
    </recommendedName>
    <alternativeName>
        <fullName>CYPIIK1</fullName>
    </alternativeName>
    <alternativeName>
        <fullName>Cytochrome P450 LMC2</fullName>
    </alternativeName>
</protein>
<dbReference type="EC" id="1.14.14.1"/>
<dbReference type="EMBL" id="L11528">
    <property type="protein sequence ID" value="AAA52078.1"/>
    <property type="molecule type" value="mRNA"/>
</dbReference>
<dbReference type="EMBL" id="AF045052">
    <property type="protein sequence ID" value="AAC28309.1"/>
    <property type="molecule type" value="mRNA"/>
</dbReference>
<dbReference type="PIR" id="S45644">
    <property type="entry name" value="S45644"/>
</dbReference>
<dbReference type="SMR" id="Q92090"/>
<dbReference type="Proteomes" id="UP000694395">
    <property type="component" value="Unplaced"/>
</dbReference>
<dbReference type="GO" id="GO:0005789">
    <property type="term" value="C:endoplasmic reticulum membrane"/>
    <property type="evidence" value="ECO:0007669"/>
    <property type="project" value="UniProtKB-SubCell"/>
</dbReference>
<dbReference type="GO" id="GO:0020037">
    <property type="term" value="F:heme binding"/>
    <property type="evidence" value="ECO:0007669"/>
    <property type="project" value="InterPro"/>
</dbReference>
<dbReference type="GO" id="GO:0005506">
    <property type="term" value="F:iron ion binding"/>
    <property type="evidence" value="ECO:0007669"/>
    <property type="project" value="InterPro"/>
</dbReference>
<dbReference type="GO" id="GO:0016712">
    <property type="term" value="F:oxidoreductase activity, acting on paired donors, with incorporation or reduction of molecular oxygen, reduced flavin or flavoprotein as one donor, and incorporation of one atom of oxygen"/>
    <property type="evidence" value="ECO:0007669"/>
    <property type="project" value="UniProtKB-EC"/>
</dbReference>
<dbReference type="GO" id="GO:0046222">
    <property type="term" value="P:aflatoxin metabolic process"/>
    <property type="evidence" value="ECO:0000315"/>
    <property type="project" value="AgBase"/>
</dbReference>
<dbReference type="GO" id="GO:0048252">
    <property type="term" value="P:lauric acid metabolic process"/>
    <property type="evidence" value="ECO:0000314"/>
    <property type="project" value="AgBase"/>
</dbReference>
<dbReference type="GO" id="GO:0002933">
    <property type="term" value="P:lipid hydroxylation"/>
    <property type="evidence" value="ECO:0000314"/>
    <property type="project" value="AgBase"/>
</dbReference>
<dbReference type="GO" id="GO:0006805">
    <property type="term" value="P:xenobiotic metabolic process"/>
    <property type="evidence" value="ECO:0007669"/>
    <property type="project" value="TreeGrafter"/>
</dbReference>
<dbReference type="CDD" id="cd20664">
    <property type="entry name" value="CYP2K"/>
    <property type="match status" value="1"/>
</dbReference>
<dbReference type="FunFam" id="1.10.630.10:FF:000010">
    <property type="entry name" value="cytochrome P450 2W1 isoform X2"/>
    <property type="match status" value="1"/>
</dbReference>
<dbReference type="Gene3D" id="1.10.630.10">
    <property type="entry name" value="Cytochrome P450"/>
    <property type="match status" value="1"/>
</dbReference>
<dbReference type="InterPro" id="IPR001128">
    <property type="entry name" value="Cyt_P450"/>
</dbReference>
<dbReference type="InterPro" id="IPR017972">
    <property type="entry name" value="Cyt_P450_CS"/>
</dbReference>
<dbReference type="InterPro" id="IPR002401">
    <property type="entry name" value="Cyt_P450_E_grp-I"/>
</dbReference>
<dbReference type="InterPro" id="IPR036396">
    <property type="entry name" value="Cyt_P450_sf"/>
</dbReference>
<dbReference type="InterPro" id="IPR050182">
    <property type="entry name" value="Cytochrome_P450_fam2"/>
</dbReference>
<dbReference type="PANTHER" id="PTHR24300">
    <property type="entry name" value="CYTOCHROME P450 508A4-RELATED"/>
    <property type="match status" value="1"/>
</dbReference>
<dbReference type="PANTHER" id="PTHR24300:SF319">
    <property type="entry name" value="CYTOCHROME P450, FAMILY 2, SUBFAMILY AC, POLYPEPTIDE 1"/>
    <property type="match status" value="1"/>
</dbReference>
<dbReference type="Pfam" id="PF00067">
    <property type="entry name" value="p450"/>
    <property type="match status" value="1"/>
</dbReference>
<dbReference type="PRINTS" id="PR00463">
    <property type="entry name" value="EP450I"/>
</dbReference>
<dbReference type="PRINTS" id="PR00385">
    <property type="entry name" value="P450"/>
</dbReference>
<dbReference type="SUPFAM" id="SSF48264">
    <property type="entry name" value="Cytochrome P450"/>
    <property type="match status" value="1"/>
</dbReference>
<dbReference type="PROSITE" id="PS00086">
    <property type="entry name" value="CYTOCHROME_P450"/>
    <property type="match status" value="1"/>
</dbReference>
<reference key="1">
    <citation type="journal article" date="1994" name="Arch. Biochem. Biophys.">
        <title>Cloning and sequencing of the major rainbow trout constitutive cytochrome P450 (CYP2K1): identification of a new cytochrome P450 gene subfamily and its expression in mature rainbow trout liver and trunk kidney.</title>
        <authorList>
            <person name="Buhler D.R."/>
            <person name="Yang Y.-H."/>
            <person name="Dreher T.W."/>
            <person name="Miranda C.L."/>
            <person name="Wang J.-L."/>
        </authorList>
    </citation>
    <scope>NUCLEOTIDE SEQUENCE [MRNA]</scope>
    <source>
        <tissue>Liver</tissue>
    </source>
</reference>
<reference key="2">
    <citation type="submission" date="1998-01" db="EMBL/GenBank/DDBJ databases">
        <title>Cloning and sequencing of new cytochromes P450 from liver of rainbow trout.</title>
        <authorList>
            <person name="Yang Y.-H."/>
            <person name="Buhler D.R."/>
        </authorList>
    </citation>
    <scope>NUCLEOTIDE SEQUENCE [MRNA]</scope>
    <source>
        <tissue>Liver</tissue>
    </source>
</reference>
<comment type="catalytic activity">
    <reaction>
        <text>an organic molecule + reduced [NADPH--hemoprotein reductase] + O2 = an alcohol + oxidized [NADPH--hemoprotein reductase] + H2O + H(+)</text>
        <dbReference type="Rhea" id="RHEA:17149"/>
        <dbReference type="Rhea" id="RHEA-COMP:11964"/>
        <dbReference type="Rhea" id="RHEA-COMP:11965"/>
        <dbReference type="ChEBI" id="CHEBI:15377"/>
        <dbReference type="ChEBI" id="CHEBI:15378"/>
        <dbReference type="ChEBI" id="CHEBI:15379"/>
        <dbReference type="ChEBI" id="CHEBI:30879"/>
        <dbReference type="ChEBI" id="CHEBI:57618"/>
        <dbReference type="ChEBI" id="CHEBI:58210"/>
        <dbReference type="ChEBI" id="CHEBI:142491"/>
        <dbReference type="EC" id="1.14.14.1"/>
    </reaction>
</comment>
<comment type="cofactor">
    <cofactor evidence="1">
        <name>heme</name>
        <dbReference type="ChEBI" id="CHEBI:30413"/>
    </cofactor>
</comment>
<comment type="subcellular location">
    <subcellularLocation>
        <location evidence="1">Endoplasmic reticulum membrane</location>
        <topology evidence="1">Peripheral membrane protein</topology>
    </subcellularLocation>
    <subcellularLocation>
        <location evidence="1">Microsome membrane</location>
        <topology evidence="1">Peripheral membrane protein</topology>
    </subcellularLocation>
</comment>
<comment type="induction">
    <text>Constitutively expressed.</text>
</comment>
<comment type="similarity">
    <text evidence="2">Belongs to the cytochrome P450 family.</text>
</comment>
<organism>
    <name type="scientific">Oncorhynchus mykiss</name>
    <name type="common">Rainbow trout</name>
    <name type="synonym">Salmo gairdneri</name>
    <dbReference type="NCBI Taxonomy" id="8022"/>
    <lineage>
        <taxon>Eukaryota</taxon>
        <taxon>Metazoa</taxon>
        <taxon>Chordata</taxon>
        <taxon>Craniata</taxon>
        <taxon>Vertebrata</taxon>
        <taxon>Euteleostomi</taxon>
        <taxon>Actinopterygii</taxon>
        <taxon>Neopterygii</taxon>
        <taxon>Teleostei</taxon>
        <taxon>Protacanthopterygii</taxon>
        <taxon>Salmoniformes</taxon>
        <taxon>Salmonidae</taxon>
        <taxon>Salmoninae</taxon>
        <taxon>Oncorhynchus</taxon>
    </lineage>
</organism>
<accession>Q92090</accession>
<accession>O93304</accession>
<feature type="chain" id="PRO_0000051773" description="Cytochrome P450 2K1">
    <location>
        <begin position="1"/>
        <end position="504"/>
    </location>
</feature>
<feature type="binding site" description="axial binding residue" evidence="1">
    <location>
        <position position="447"/>
    </location>
    <ligand>
        <name>heme</name>
        <dbReference type="ChEBI" id="CHEBI:30413"/>
    </ligand>
    <ligandPart>
        <name>Fe</name>
        <dbReference type="ChEBI" id="CHEBI:18248"/>
    </ligandPart>
</feature>
<feature type="sequence variant" description="In allele CYP2K1v2.">
    <original>DI</original>
    <variation>GL</variation>
    <location>
        <begin position="6"/>
        <end position="7"/>
    </location>
</feature>
<feature type="sequence variant" description="In allele CYP2K1v2.">
    <original>E</original>
    <variation>G</variation>
    <location>
        <position position="37"/>
    </location>
</feature>
<feature type="sequence variant" description="In allele CYP2K1v2.">
    <original>V</original>
    <variation>F</variation>
    <location>
        <position position="79"/>
    </location>
</feature>
<feature type="sequence variant" description="In allele CYP2K1v2.">
    <original>I</original>
    <variation>T</variation>
    <location>
        <position position="256"/>
    </location>
</feature>
<feature type="sequence variant" description="In allele CYP2K1v2.">
    <original>G</original>
    <variation>S</variation>
    <location>
        <position position="261"/>
    </location>
</feature>
<feature type="sequence variant" description="In allele CYP2K1v2.">
    <original>N</original>
    <variation>D</variation>
    <location>
        <position position="372"/>
    </location>
</feature>
<gene>
    <name type="primary">cyp2k1</name>
</gene>
<keyword id="KW-0256">Endoplasmic reticulum</keyword>
<keyword id="KW-0349">Heme</keyword>
<keyword id="KW-0408">Iron</keyword>
<keyword id="KW-0472">Membrane</keyword>
<keyword id="KW-0479">Metal-binding</keyword>
<keyword id="KW-0492">Microsome</keyword>
<keyword id="KW-0503">Monooxygenase</keyword>
<keyword id="KW-0560">Oxidoreductase</keyword>
<name>CP2K1_ONCMY</name>